<feature type="chain" id="PRO_0000320425" description="Ribosome biogenesis protein NSA2">
    <location>
        <begin position="1"/>
        <end position="262"/>
    </location>
</feature>
<feature type="region of interest" description="Disordered" evidence="4">
    <location>
        <begin position="1"/>
        <end position="38"/>
    </location>
</feature>
<feature type="region of interest" description="Disordered" evidence="4">
    <location>
        <begin position="53"/>
        <end position="85"/>
    </location>
</feature>
<feature type="short sequence motif" description="Nuclear localization signal 1" evidence="3">
    <location>
        <begin position="11"/>
        <end position="18"/>
    </location>
</feature>
<feature type="short sequence motif" description="Nuclear localization signal 2" evidence="3">
    <location>
        <begin position="51"/>
        <end position="58"/>
    </location>
</feature>
<feature type="compositionally biased region" description="Basic and acidic residues" evidence="4">
    <location>
        <begin position="18"/>
        <end position="34"/>
    </location>
</feature>
<feature type="compositionally biased region" description="Basic residues" evidence="4">
    <location>
        <begin position="53"/>
        <end position="65"/>
    </location>
</feature>
<feature type="compositionally biased region" description="Polar residues" evidence="4">
    <location>
        <begin position="75"/>
        <end position="85"/>
    </location>
</feature>
<name>NSA2_MYCMD</name>
<evidence type="ECO:0000250" key="1"/>
<evidence type="ECO:0000250" key="2">
    <source>
        <dbReference type="UniProtKB" id="P40078"/>
    </source>
</evidence>
<evidence type="ECO:0000255" key="3">
    <source>
        <dbReference type="PROSITE-ProRule" id="PRU00768"/>
    </source>
</evidence>
<evidence type="ECO:0000256" key="4">
    <source>
        <dbReference type="SAM" id="MobiDB-lite"/>
    </source>
</evidence>
<evidence type="ECO:0000305" key="5"/>
<proteinExistence type="inferred from homology"/>
<organism>
    <name type="scientific">Mycosarcoma maydis</name>
    <name type="common">Corn smut fungus</name>
    <name type="synonym">Ustilago maydis</name>
    <dbReference type="NCBI Taxonomy" id="5270"/>
    <lineage>
        <taxon>Eukaryota</taxon>
        <taxon>Fungi</taxon>
        <taxon>Dikarya</taxon>
        <taxon>Basidiomycota</taxon>
        <taxon>Ustilaginomycotina</taxon>
        <taxon>Ustilaginomycetes</taxon>
        <taxon>Ustilaginales</taxon>
        <taxon>Ustilaginaceae</taxon>
        <taxon>Mycosarcoma</taxon>
    </lineage>
</organism>
<keyword id="KW-0539">Nucleus</keyword>
<keyword id="KW-1185">Reference proteome</keyword>
<keyword id="KW-0687">Ribonucleoprotein</keyword>
<keyword id="KW-0690">Ribosome biogenesis</keyword>
<keyword id="KW-0698">rRNA processing</keyword>
<dbReference type="EMBL" id="CM003143">
    <property type="protein sequence ID" value="KIS70167.1"/>
    <property type="molecule type" value="Genomic_DNA"/>
</dbReference>
<dbReference type="RefSeq" id="XP_011388405.1">
    <property type="nucleotide sequence ID" value="XM_011390103.1"/>
</dbReference>
<dbReference type="SMR" id="Q4P3S7"/>
<dbReference type="FunCoup" id="Q4P3S7">
    <property type="interactions" value="472"/>
</dbReference>
<dbReference type="STRING" id="237631.Q4P3S7"/>
<dbReference type="EnsemblFungi" id="KIS70167">
    <property type="protein sequence ID" value="KIS70167"/>
    <property type="gene ID" value="UMAG_11787"/>
</dbReference>
<dbReference type="GeneID" id="23567631"/>
<dbReference type="KEGG" id="uma:UMAG_11787"/>
<dbReference type="VEuPathDB" id="FungiDB:UMAG_11787"/>
<dbReference type="eggNOG" id="KOG3163">
    <property type="taxonomic scope" value="Eukaryota"/>
</dbReference>
<dbReference type="HOGENOM" id="CLU_1070048_0_0_1"/>
<dbReference type="InParanoid" id="Q4P3S7"/>
<dbReference type="OrthoDB" id="1847590at2759"/>
<dbReference type="Proteomes" id="UP000000561">
    <property type="component" value="Chromosome 4"/>
</dbReference>
<dbReference type="GO" id="GO:0005730">
    <property type="term" value="C:nucleolus"/>
    <property type="evidence" value="ECO:0007669"/>
    <property type="project" value="UniProtKB-SubCell"/>
</dbReference>
<dbReference type="GO" id="GO:0030687">
    <property type="term" value="C:preribosome, large subunit precursor"/>
    <property type="evidence" value="ECO:0000318"/>
    <property type="project" value="GO_Central"/>
</dbReference>
<dbReference type="GO" id="GO:0000460">
    <property type="term" value="P:maturation of 5.8S rRNA"/>
    <property type="evidence" value="ECO:0000318"/>
    <property type="project" value="GO_Central"/>
</dbReference>
<dbReference type="GO" id="GO:0000466">
    <property type="term" value="P:maturation of 5.8S rRNA from tricistronic rRNA transcript (SSU-rRNA, 5.8S rRNA, LSU-rRNA)"/>
    <property type="evidence" value="ECO:0007669"/>
    <property type="project" value="EnsemblFungi"/>
</dbReference>
<dbReference type="GO" id="GO:0000470">
    <property type="term" value="P:maturation of LSU-rRNA"/>
    <property type="evidence" value="ECO:0000318"/>
    <property type="project" value="GO_Central"/>
</dbReference>
<dbReference type="GO" id="GO:0000463">
    <property type="term" value="P:maturation of LSU-rRNA from tricistronic rRNA transcript (SSU-rRNA, 5.8S rRNA, LSU-rRNA)"/>
    <property type="evidence" value="ECO:0007669"/>
    <property type="project" value="EnsemblFungi"/>
</dbReference>
<dbReference type="CDD" id="cd11381">
    <property type="entry name" value="NSA2"/>
    <property type="match status" value="1"/>
</dbReference>
<dbReference type="FunFam" id="2.40.10.310:FF:000001">
    <property type="entry name" value="NSA2, ribosome biogenesis homolog"/>
    <property type="match status" value="1"/>
</dbReference>
<dbReference type="Gene3D" id="2.40.10.310">
    <property type="match status" value="1"/>
</dbReference>
<dbReference type="InterPro" id="IPR039411">
    <property type="entry name" value="NSA2_fam"/>
</dbReference>
<dbReference type="InterPro" id="IPR022309">
    <property type="entry name" value="Ribosomal_Se8/biogenesis_NSA2"/>
</dbReference>
<dbReference type="PANTHER" id="PTHR12642">
    <property type="entry name" value="RIBOSOME BIOGENESIS PROTEIN NSA2 HOMOLOG"/>
    <property type="match status" value="1"/>
</dbReference>
<dbReference type="Pfam" id="PF01201">
    <property type="entry name" value="Ribosomal_S8e"/>
    <property type="match status" value="1"/>
</dbReference>
<gene>
    <name type="primary">NSA2</name>
    <name type="ORF">UMAG_11787</name>
</gene>
<protein>
    <recommendedName>
        <fullName>Ribosome biogenesis protein NSA2</fullName>
    </recommendedName>
</protein>
<comment type="function">
    <text evidence="1">Involved in the biogenesis of the 60S ribosomal subunit. May play a part in the quality control of pre-60S particles (By similarity).</text>
</comment>
<comment type="subunit">
    <text evidence="2">Component of the pre-66S ribosomal particle. Interacts with NOP7 and RRP1. Interacts with RSA4 (via WD repeats).</text>
</comment>
<comment type="subcellular location">
    <subcellularLocation>
        <location evidence="1">Nucleus</location>
        <location evidence="1">Nucleolus</location>
    </subcellularLocation>
</comment>
<comment type="similarity">
    <text evidence="5">Belongs to the eukaryotic ribosomal protein eS8 family. Ribosome biogenesis protein NSA2 subfamily.</text>
</comment>
<accession>Q4P3S7</accession>
<accession>A0A0D1CA12</accession>
<reference key="1">
    <citation type="journal article" date="2006" name="Nature">
        <title>Insights from the genome of the biotrophic fungal plant pathogen Ustilago maydis.</title>
        <authorList>
            <person name="Kaemper J."/>
            <person name="Kahmann R."/>
            <person name="Boelker M."/>
            <person name="Ma L.-J."/>
            <person name="Brefort T."/>
            <person name="Saville B.J."/>
            <person name="Banuett F."/>
            <person name="Kronstad J.W."/>
            <person name="Gold S.E."/>
            <person name="Mueller O."/>
            <person name="Perlin M.H."/>
            <person name="Woesten H.A.B."/>
            <person name="de Vries R."/>
            <person name="Ruiz-Herrera J."/>
            <person name="Reynaga-Pena C.G."/>
            <person name="Snetselaar K."/>
            <person name="McCann M."/>
            <person name="Perez-Martin J."/>
            <person name="Feldbruegge M."/>
            <person name="Basse C.W."/>
            <person name="Steinberg G."/>
            <person name="Ibeas J.I."/>
            <person name="Holloman W."/>
            <person name="Guzman P."/>
            <person name="Farman M.L."/>
            <person name="Stajich J.E."/>
            <person name="Sentandreu R."/>
            <person name="Gonzalez-Prieto J.M."/>
            <person name="Kennell J.C."/>
            <person name="Molina L."/>
            <person name="Schirawski J."/>
            <person name="Mendoza-Mendoza A."/>
            <person name="Greilinger D."/>
            <person name="Muench K."/>
            <person name="Roessel N."/>
            <person name="Scherer M."/>
            <person name="Vranes M."/>
            <person name="Ladendorf O."/>
            <person name="Vincon V."/>
            <person name="Fuchs U."/>
            <person name="Sandrock B."/>
            <person name="Meng S."/>
            <person name="Ho E.C.H."/>
            <person name="Cahill M.J."/>
            <person name="Boyce K.J."/>
            <person name="Klose J."/>
            <person name="Klosterman S.J."/>
            <person name="Deelstra H.J."/>
            <person name="Ortiz-Castellanos L."/>
            <person name="Li W."/>
            <person name="Sanchez-Alonso P."/>
            <person name="Schreier P.H."/>
            <person name="Haeuser-Hahn I."/>
            <person name="Vaupel M."/>
            <person name="Koopmann E."/>
            <person name="Friedrich G."/>
            <person name="Voss H."/>
            <person name="Schlueter T."/>
            <person name="Margolis J."/>
            <person name="Platt D."/>
            <person name="Swimmer C."/>
            <person name="Gnirke A."/>
            <person name="Chen F."/>
            <person name="Vysotskaia V."/>
            <person name="Mannhaupt G."/>
            <person name="Gueldener U."/>
            <person name="Muensterkoetter M."/>
            <person name="Haase D."/>
            <person name="Oesterheld M."/>
            <person name="Mewes H.-W."/>
            <person name="Mauceli E.W."/>
            <person name="DeCaprio D."/>
            <person name="Wade C.M."/>
            <person name="Butler J."/>
            <person name="Young S.K."/>
            <person name="Jaffe D.B."/>
            <person name="Calvo S.E."/>
            <person name="Nusbaum C."/>
            <person name="Galagan J.E."/>
            <person name="Birren B.W."/>
        </authorList>
    </citation>
    <scope>NUCLEOTIDE SEQUENCE [LARGE SCALE GENOMIC DNA]</scope>
    <source>
        <strain>DSM 14603 / FGSC 9021 / UM521</strain>
    </source>
</reference>
<reference key="2">
    <citation type="submission" date="2014-09" db="EMBL/GenBank/DDBJ databases">
        <authorList>
            <person name="Gueldener U."/>
            <person name="Muensterkoetter M."/>
            <person name="Walter M.C."/>
            <person name="Mannhaupt G."/>
            <person name="Kahmann R."/>
        </authorList>
    </citation>
    <scope>GENOME REANNOTATION</scope>
    <source>
        <strain>DSM 14603 / FGSC 9021 / UM521</strain>
    </source>
</reference>
<sequence>MPQNDYIEEHIRRHGRRLDHEERQRKRAAREVHKASAVAQKVTGLKAKMLNKKRRNEKIQMKKTLKAHEERDVKQASTSSDPNQALPTYLLDREGQKDAKALSSAVKERRKDKAARYSVPLPQVRGIAEDEAFKVIKTGKRKQKGWKRMVTKPTFVGESFTRKPPKLERFIRPMGLRYNKAHVTHPELKASFNLPIVGVKKNPQSPLYTQLGVLTKGTIIEVNVSELGMTTTTGKVVWGKYAQVTNNPENDGCVNAVLLLSS</sequence>